<organism>
    <name type="scientific">Yersinia pseudotuberculosis serotype I (strain IP32953)</name>
    <dbReference type="NCBI Taxonomy" id="273123"/>
    <lineage>
        <taxon>Bacteria</taxon>
        <taxon>Pseudomonadati</taxon>
        <taxon>Pseudomonadota</taxon>
        <taxon>Gammaproteobacteria</taxon>
        <taxon>Enterobacterales</taxon>
        <taxon>Yersiniaceae</taxon>
        <taxon>Yersinia</taxon>
    </lineage>
</organism>
<gene>
    <name evidence="1" type="primary">add</name>
    <name type="ordered locus">YPTB2180</name>
</gene>
<proteinExistence type="inferred from homology"/>
<evidence type="ECO:0000255" key="1">
    <source>
        <dbReference type="HAMAP-Rule" id="MF_00540"/>
    </source>
</evidence>
<comment type="function">
    <text evidence="1">Catalyzes the hydrolytic deamination of adenosine and 2-deoxyadenosine.</text>
</comment>
<comment type="catalytic activity">
    <reaction evidence="1">
        <text>adenosine + H2O + H(+) = inosine + NH4(+)</text>
        <dbReference type="Rhea" id="RHEA:24408"/>
        <dbReference type="ChEBI" id="CHEBI:15377"/>
        <dbReference type="ChEBI" id="CHEBI:15378"/>
        <dbReference type="ChEBI" id="CHEBI:16335"/>
        <dbReference type="ChEBI" id="CHEBI:17596"/>
        <dbReference type="ChEBI" id="CHEBI:28938"/>
        <dbReference type="EC" id="3.5.4.4"/>
    </reaction>
    <physiologicalReaction direction="left-to-right" evidence="1">
        <dbReference type="Rhea" id="RHEA:24409"/>
    </physiologicalReaction>
</comment>
<comment type="catalytic activity">
    <reaction evidence="1">
        <text>2'-deoxyadenosine + H2O + H(+) = 2'-deoxyinosine + NH4(+)</text>
        <dbReference type="Rhea" id="RHEA:28190"/>
        <dbReference type="ChEBI" id="CHEBI:15377"/>
        <dbReference type="ChEBI" id="CHEBI:15378"/>
        <dbReference type="ChEBI" id="CHEBI:17256"/>
        <dbReference type="ChEBI" id="CHEBI:28938"/>
        <dbReference type="ChEBI" id="CHEBI:28997"/>
        <dbReference type="EC" id="3.5.4.4"/>
    </reaction>
    <physiologicalReaction direction="left-to-right" evidence="1">
        <dbReference type="Rhea" id="RHEA:28191"/>
    </physiologicalReaction>
</comment>
<comment type="cofactor">
    <cofactor evidence="1">
        <name>Zn(2+)</name>
        <dbReference type="ChEBI" id="CHEBI:29105"/>
    </cofactor>
    <text evidence="1">Binds 1 zinc ion per subunit.</text>
</comment>
<comment type="similarity">
    <text evidence="1">Belongs to the metallo-dependent hydrolases superfamily. Adenosine and AMP deaminases family. Adenosine deaminase subfamily.</text>
</comment>
<name>ADD_YERPS</name>
<keyword id="KW-0378">Hydrolase</keyword>
<keyword id="KW-0479">Metal-binding</keyword>
<keyword id="KW-0546">Nucleotide metabolism</keyword>
<keyword id="KW-0862">Zinc</keyword>
<sequence>MIDPRLPLTDIHRHLDGNIRAQTILDLGQQFNLNLPANELDTLRPHVQITKTEPDLVSFLQKLDWGVAVLGSLDACRRVAYENVEDAAHAGLHYAELRFSPFYMAMKHQLPITGVVEAVIDGIASGCRDFNIDIRLIGILSRTFGEQACLQELDSLLAHREGITALDLAGDELGFPGSLFRRHFNRARDAGLRITVHAGEAAGPESIWQAIRELGAERIGHGVKAVEDRKLMDYLAEHKIGIESCLTSNIQTSTVVSLATHPLATFLRHGIVASINTDDPAVQGIEIANEYLVAAPAAGLTPHEIRQAQANGLEMAFISEQEKQALRDKVFPIS</sequence>
<dbReference type="EC" id="3.5.4.4" evidence="1"/>
<dbReference type="EMBL" id="BX936398">
    <property type="protein sequence ID" value="CAH21418.1"/>
    <property type="molecule type" value="Genomic_DNA"/>
</dbReference>
<dbReference type="RefSeq" id="WP_011192469.1">
    <property type="nucleotide sequence ID" value="NC_006155.1"/>
</dbReference>
<dbReference type="SMR" id="Q66AF0"/>
<dbReference type="GeneID" id="49785824"/>
<dbReference type="KEGG" id="ypo:BZ17_282"/>
<dbReference type="KEGG" id="yps:YPTB2180"/>
<dbReference type="PATRIC" id="fig|273123.14.peg.298"/>
<dbReference type="Proteomes" id="UP000001011">
    <property type="component" value="Chromosome"/>
</dbReference>
<dbReference type="GO" id="GO:0005829">
    <property type="term" value="C:cytosol"/>
    <property type="evidence" value="ECO:0007669"/>
    <property type="project" value="TreeGrafter"/>
</dbReference>
<dbReference type="GO" id="GO:0046936">
    <property type="term" value="F:2'-deoxyadenosine deaminase activity"/>
    <property type="evidence" value="ECO:0007669"/>
    <property type="project" value="RHEA"/>
</dbReference>
<dbReference type="GO" id="GO:0004000">
    <property type="term" value="F:adenosine deaminase activity"/>
    <property type="evidence" value="ECO:0007669"/>
    <property type="project" value="UniProtKB-UniRule"/>
</dbReference>
<dbReference type="GO" id="GO:0008270">
    <property type="term" value="F:zinc ion binding"/>
    <property type="evidence" value="ECO:0007669"/>
    <property type="project" value="UniProtKB-UniRule"/>
</dbReference>
<dbReference type="GO" id="GO:0006154">
    <property type="term" value="P:adenosine catabolic process"/>
    <property type="evidence" value="ECO:0007669"/>
    <property type="project" value="TreeGrafter"/>
</dbReference>
<dbReference type="GO" id="GO:0043103">
    <property type="term" value="P:hypoxanthine salvage"/>
    <property type="evidence" value="ECO:0007669"/>
    <property type="project" value="TreeGrafter"/>
</dbReference>
<dbReference type="GO" id="GO:0046103">
    <property type="term" value="P:inosine biosynthetic process"/>
    <property type="evidence" value="ECO:0007669"/>
    <property type="project" value="TreeGrafter"/>
</dbReference>
<dbReference type="GO" id="GO:0009117">
    <property type="term" value="P:nucleotide metabolic process"/>
    <property type="evidence" value="ECO:0007669"/>
    <property type="project" value="UniProtKB-KW"/>
</dbReference>
<dbReference type="GO" id="GO:0009168">
    <property type="term" value="P:purine ribonucleoside monophosphate biosynthetic process"/>
    <property type="evidence" value="ECO:0007669"/>
    <property type="project" value="UniProtKB-UniRule"/>
</dbReference>
<dbReference type="CDD" id="cd01320">
    <property type="entry name" value="ADA"/>
    <property type="match status" value="1"/>
</dbReference>
<dbReference type="FunFam" id="3.20.20.140:FF:000009">
    <property type="entry name" value="Adenosine deaminase"/>
    <property type="match status" value="1"/>
</dbReference>
<dbReference type="Gene3D" id="3.20.20.140">
    <property type="entry name" value="Metal-dependent hydrolases"/>
    <property type="match status" value="1"/>
</dbReference>
<dbReference type="HAMAP" id="MF_00540">
    <property type="entry name" value="A_deaminase"/>
    <property type="match status" value="1"/>
</dbReference>
<dbReference type="InterPro" id="IPR006650">
    <property type="entry name" value="A/AMP_deam_AS"/>
</dbReference>
<dbReference type="InterPro" id="IPR028893">
    <property type="entry name" value="A_deaminase"/>
</dbReference>
<dbReference type="InterPro" id="IPR001365">
    <property type="entry name" value="A_deaminase_dom"/>
</dbReference>
<dbReference type="InterPro" id="IPR006330">
    <property type="entry name" value="Ado/ade_deaminase"/>
</dbReference>
<dbReference type="InterPro" id="IPR032466">
    <property type="entry name" value="Metal_Hydrolase"/>
</dbReference>
<dbReference type="NCBIfam" id="TIGR01430">
    <property type="entry name" value="aden_deam"/>
    <property type="match status" value="1"/>
</dbReference>
<dbReference type="NCBIfam" id="NF006846">
    <property type="entry name" value="PRK09358.1-1"/>
    <property type="match status" value="1"/>
</dbReference>
<dbReference type="PANTHER" id="PTHR11409">
    <property type="entry name" value="ADENOSINE DEAMINASE"/>
    <property type="match status" value="1"/>
</dbReference>
<dbReference type="PANTHER" id="PTHR11409:SF43">
    <property type="entry name" value="ADENOSINE DEAMINASE"/>
    <property type="match status" value="1"/>
</dbReference>
<dbReference type="Pfam" id="PF00962">
    <property type="entry name" value="A_deaminase"/>
    <property type="match status" value="1"/>
</dbReference>
<dbReference type="SUPFAM" id="SSF51556">
    <property type="entry name" value="Metallo-dependent hydrolases"/>
    <property type="match status" value="1"/>
</dbReference>
<dbReference type="PROSITE" id="PS00485">
    <property type="entry name" value="A_DEAMINASE"/>
    <property type="match status" value="1"/>
</dbReference>
<feature type="chain" id="PRO_1000017714" description="Adenosine deaminase">
    <location>
        <begin position="1"/>
        <end position="334"/>
    </location>
</feature>
<feature type="active site" description="Proton donor" evidence="1">
    <location>
        <position position="200"/>
    </location>
</feature>
<feature type="binding site" evidence="1">
    <location>
        <position position="12"/>
    </location>
    <ligand>
        <name>Zn(2+)</name>
        <dbReference type="ChEBI" id="CHEBI:29105"/>
        <note>catalytic</note>
    </ligand>
</feature>
<feature type="binding site" evidence="1">
    <location>
        <position position="14"/>
    </location>
    <ligand>
        <name>substrate</name>
    </ligand>
</feature>
<feature type="binding site" evidence="1">
    <location>
        <position position="14"/>
    </location>
    <ligand>
        <name>Zn(2+)</name>
        <dbReference type="ChEBI" id="CHEBI:29105"/>
        <note>catalytic</note>
    </ligand>
</feature>
<feature type="binding site" evidence="1">
    <location>
        <position position="16"/>
    </location>
    <ligand>
        <name>substrate</name>
    </ligand>
</feature>
<feature type="binding site" evidence="1">
    <location>
        <position position="170"/>
    </location>
    <ligand>
        <name>substrate</name>
    </ligand>
</feature>
<feature type="binding site" evidence="1">
    <location>
        <position position="197"/>
    </location>
    <ligand>
        <name>Zn(2+)</name>
        <dbReference type="ChEBI" id="CHEBI:29105"/>
        <note>catalytic</note>
    </ligand>
</feature>
<feature type="binding site" evidence="1">
    <location>
        <position position="278"/>
    </location>
    <ligand>
        <name>Zn(2+)</name>
        <dbReference type="ChEBI" id="CHEBI:29105"/>
        <note>catalytic</note>
    </ligand>
</feature>
<feature type="binding site" evidence="1">
    <location>
        <position position="279"/>
    </location>
    <ligand>
        <name>substrate</name>
    </ligand>
</feature>
<feature type="site" description="Important for catalytic activity" evidence="1">
    <location>
        <position position="221"/>
    </location>
</feature>
<reference key="1">
    <citation type="journal article" date="2004" name="Proc. Natl. Acad. Sci. U.S.A.">
        <title>Insights into the evolution of Yersinia pestis through whole-genome comparison with Yersinia pseudotuberculosis.</title>
        <authorList>
            <person name="Chain P.S.G."/>
            <person name="Carniel E."/>
            <person name="Larimer F.W."/>
            <person name="Lamerdin J."/>
            <person name="Stoutland P.O."/>
            <person name="Regala W.M."/>
            <person name="Georgescu A.M."/>
            <person name="Vergez L.M."/>
            <person name="Land M.L."/>
            <person name="Motin V.L."/>
            <person name="Brubaker R.R."/>
            <person name="Fowler J."/>
            <person name="Hinnebusch J."/>
            <person name="Marceau M."/>
            <person name="Medigue C."/>
            <person name="Simonet M."/>
            <person name="Chenal-Francisque V."/>
            <person name="Souza B."/>
            <person name="Dacheux D."/>
            <person name="Elliott J.M."/>
            <person name="Derbise A."/>
            <person name="Hauser L.J."/>
            <person name="Garcia E."/>
        </authorList>
    </citation>
    <scope>NUCLEOTIDE SEQUENCE [LARGE SCALE GENOMIC DNA]</scope>
    <source>
        <strain>IP32953</strain>
    </source>
</reference>
<accession>Q66AF0</accession>
<protein>
    <recommendedName>
        <fullName evidence="1">Adenosine deaminase</fullName>
        <ecNumber evidence="1">3.5.4.4</ecNumber>
    </recommendedName>
    <alternativeName>
        <fullName evidence="1">Adenosine aminohydrolase</fullName>
    </alternativeName>
</protein>